<feature type="chain" id="PRO_0000143910" description="Uridylate kinase">
    <location>
        <begin position="1"/>
        <end position="247"/>
    </location>
</feature>
<feature type="binding site" evidence="1">
    <location>
        <begin position="16"/>
        <end position="19"/>
    </location>
    <ligand>
        <name>ATP</name>
        <dbReference type="ChEBI" id="CHEBI:30616"/>
    </ligand>
</feature>
<feature type="binding site" evidence="1">
    <location>
        <position position="58"/>
    </location>
    <ligand>
        <name>UMP</name>
        <dbReference type="ChEBI" id="CHEBI:57865"/>
    </ligand>
</feature>
<feature type="binding site" evidence="1">
    <location>
        <position position="59"/>
    </location>
    <ligand>
        <name>ATP</name>
        <dbReference type="ChEBI" id="CHEBI:30616"/>
    </ligand>
</feature>
<feature type="binding site" evidence="1">
    <location>
        <position position="63"/>
    </location>
    <ligand>
        <name>ATP</name>
        <dbReference type="ChEBI" id="CHEBI:30616"/>
    </ligand>
</feature>
<feature type="binding site" evidence="1">
    <location>
        <position position="78"/>
    </location>
    <ligand>
        <name>UMP</name>
        <dbReference type="ChEBI" id="CHEBI:57865"/>
    </ligand>
</feature>
<feature type="binding site" evidence="1">
    <location>
        <begin position="139"/>
        <end position="146"/>
    </location>
    <ligand>
        <name>UMP</name>
        <dbReference type="ChEBI" id="CHEBI:57865"/>
    </ligand>
</feature>
<feature type="binding site" evidence="1">
    <location>
        <position position="166"/>
    </location>
    <ligand>
        <name>ATP</name>
        <dbReference type="ChEBI" id="CHEBI:30616"/>
    </ligand>
</feature>
<feature type="binding site" evidence="1">
    <location>
        <position position="172"/>
    </location>
    <ligand>
        <name>ATP</name>
        <dbReference type="ChEBI" id="CHEBI:30616"/>
    </ligand>
</feature>
<feature type="binding site" evidence="1">
    <location>
        <position position="175"/>
    </location>
    <ligand>
        <name>ATP</name>
        <dbReference type="ChEBI" id="CHEBI:30616"/>
    </ligand>
</feature>
<dbReference type="EC" id="2.7.4.22" evidence="1"/>
<dbReference type="EMBL" id="AE009442">
    <property type="protein sequence ID" value="AAO28220.1"/>
    <property type="molecule type" value="Genomic_DNA"/>
</dbReference>
<dbReference type="SMR" id="Q87EH1"/>
<dbReference type="KEGG" id="xft:PD_0337"/>
<dbReference type="HOGENOM" id="CLU_033861_0_0_6"/>
<dbReference type="UniPathway" id="UPA00159">
    <property type="reaction ID" value="UER00275"/>
</dbReference>
<dbReference type="Proteomes" id="UP000002516">
    <property type="component" value="Chromosome"/>
</dbReference>
<dbReference type="GO" id="GO:0005829">
    <property type="term" value="C:cytosol"/>
    <property type="evidence" value="ECO:0007669"/>
    <property type="project" value="TreeGrafter"/>
</dbReference>
<dbReference type="GO" id="GO:0005524">
    <property type="term" value="F:ATP binding"/>
    <property type="evidence" value="ECO:0007669"/>
    <property type="project" value="UniProtKB-KW"/>
</dbReference>
<dbReference type="GO" id="GO:0033862">
    <property type="term" value="F:UMP kinase activity"/>
    <property type="evidence" value="ECO:0007669"/>
    <property type="project" value="UniProtKB-EC"/>
</dbReference>
<dbReference type="GO" id="GO:0044210">
    <property type="term" value="P:'de novo' CTP biosynthetic process"/>
    <property type="evidence" value="ECO:0007669"/>
    <property type="project" value="UniProtKB-UniRule"/>
</dbReference>
<dbReference type="GO" id="GO:0006225">
    <property type="term" value="P:UDP biosynthetic process"/>
    <property type="evidence" value="ECO:0007669"/>
    <property type="project" value="TreeGrafter"/>
</dbReference>
<dbReference type="CDD" id="cd04254">
    <property type="entry name" value="AAK_UMPK-PyrH-Ec"/>
    <property type="match status" value="1"/>
</dbReference>
<dbReference type="FunFam" id="3.40.1160.10:FF:000001">
    <property type="entry name" value="Uridylate kinase"/>
    <property type="match status" value="1"/>
</dbReference>
<dbReference type="Gene3D" id="3.40.1160.10">
    <property type="entry name" value="Acetylglutamate kinase-like"/>
    <property type="match status" value="1"/>
</dbReference>
<dbReference type="HAMAP" id="MF_01220_B">
    <property type="entry name" value="PyrH_B"/>
    <property type="match status" value="1"/>
</dbReference>
<dbReference type="InterPro" id="IPR036393">
    <property type="entry name" value="AceGlu_kinase-like_sf"/>
</dbReference>
<dbReference type="InterPro" id="IPR001048">
    <property type="entry name" value="Asp/Glu/Uridylate_kinase"/>
</dbReference>
<dbReference type="InterPro" id="IPR011817">
    <property type="entry name" value="Uridylate_kinase"/>
</dbReference>
<dbReference type="InterPro" id="IPR015963">
    <property type="entry name" value="Uridylate_kinase_bac"/>
</dbReference>
<dbReference type="NCBIfam" id="TIGR02075">
    <property type="entry name" value="pyrH_bact"/>
    <property type="match status" value="1"/>
</dbReference>
<dbReference type="PANTHER" id="PTHR42833">
    <property type="entry name" value="URIDYLATE KINASE"/>
    <property type="match status" value="1"/>
</dbReference>
<dbReference type="PANTHER" id="PTHR42833:SF4">
    <property type="entry name" value="URIDYLATE KINASE PUMPKIN, CHLOROPLASTIC"/>
    <property type="match status" value="1"/>
</dbReference>
<dbReference type="Pfam" id="PF00696">
    <property type="entry name" value="AA_kinase"/>
    <property type="match status" value="1"/>
</dbReference>
<dbReference type="PIRSF" id="PIRSF005650">
    <property type="entry name" value="Uridylate_kin"/>
    <property type="match status" value="1"/>
</dbReference>
<dbReference type="SUPFAM" id="SSF53633">
    <property type="entry name" value="Carbamate kinase-like"/>
    <property type="match status" value="1"/>
</dbReference>
<proteinExistence type="inferred from homology"/>
<name>PYRH_XYLFT</name>
<reference key="1">
    <citation type="journal article" date="2003" name="J. Bacteriol.">
        <title>Comparative analyses of the complete genome sequences of Pierce's disease and citrus variegated chlorosis strains of Xylella fastidiosa.</title>
        <authorList>
            <person name="Van Sluys M.A."/>
            <person name="de Oliveira M.C."/>
            <person name="Monteiro-Vitorello C.B."/>
            <person name="Miyaki C.Y."/>
            <person name="Furlan L.R."/>
            <person name="Camargo L.E.A."/>
            <person name="da Silva A.C.R."/>
            <person name="Moon D.H."/>
            <person name="Takita M.A."/>
            <person name="Lemos E.G.M."/>
            <person name="Machado M.A."/>
            <person name="Ferro M.I.T."/>
            <person name="da Silva F.R."/>
            <person name="Goldman M.H.S."/>
            <person name="Goldman G.H."/>
            <person name="Lemos M.V.F."/>
            <person name="El-Dorry H."/>
            <person name="Tsai S.M."/>
            <person name="Carrer H."/>
            <person name="Carraro D.M."/>
            <person name="de Oliveira R.C."/>
            <person name="Nunes L.R."/>
            <person name="Siqueira W.J."/>
            <person name="Coutinho L.L."/>
            <person name="Kimura E.T."/>
            <person name="Ferro E.S."/>
            <person name="Harakava R."/>
            <person name="Kuramae E.E."/>
            <person name="Marino C.L."/>
            <person name="Giglioti E."/>
            <person name="Abreu I.L."/>
            <person name="Alves L.M.C."/>
            <person name="do Amaral A.M."/>
            <person name="Baia G.S."/>
            <person name="Blanco S.R."/>
            <person name="Brito M.S."/>
            <person name="Cannavan F.S."/>
            <person name="Celestino A.V."/>
            <person name="da Cunha A.F."/>
            <person name="Fenille R.C."/>
            <person name="Ferro J.A."/>
            <person name="Formighieri E.F."/>
            <person name="Kishi L.T."/>
            <person name="Leoni S.G."/>
            <person name="Oliveira A.R."/>
            <person name="Rosa V.E. Jr."/>
            <person name="Sassaki F.T."/>
            <person name="Sena J.A.D."/>
            <person name="de Souza A.A."/>
            <person name="Truffi D."/>
            <person name="Tsukumo F."/>
            <person name="Yanai G.M."/>
            <person name="Zaros L.G."/>
            <person name="Civerolo E.L."/>
            <person name="Simpson A.J.G."/>
            <person name="Almeida N.F. Jr."/>
            <person name="Setubal J.C."/>
            <person name="Kitajima J.P."/>
        </authorList>
    </citation>
    <scope>NUCLEOTIDE SEQUENCE [LARGE SCALE GENOMIC DNA]</scope>
    <source>
        <strain>Temecula1 / ATCC 700964</strain>
    </source>
</reference>
<accession>Q87EH1</accession>
<evidence type="ECO:0000255" key="1">
    <source>
        <dbReference type="HAMAP-Rule" id="MF_01220"/>
    </source>
</evidence>
<organism>
    <name type="scientific">Xylella fastidiosa (strain Temecula1 / ATCC 700964)</name>
    <dbReference type="NCBI Taxonomy" id="183190"/>
    <lineage>
        <taxon>Bacteria</taxon>
        <taxon>Pseudomonadati</taxon>
        <taxon>Pseudomonadota</taxon>
        <taxon>Gammaproteobacteria</taxon>
        <taxon>Lysobacterales</taxon>
        <taxon>Lysobacteraceae</taxon>
        <taxon>Xylella</taxon>
    </lineage>
</organism>
<gene>
    <name evidence="1" type="primary">pyrH</name>
    <name type="ordered locus">PD_0337</name>
</gene>
<sequence length="247" mass="26818">MRYPMSKLAYHRVLLKLSGEALMGSADYGIDPKVINRLAGEVIEAQNAGAELALVIGGGNIFRGAGLAAKGMDRVTGDQMGMLATIINALAMQDALEKLGTKVRVMSAIKINNVCEDFIRRRAIRHLEKSRITIFAAGTGNPFFTTDSGAALRAIEIGADLLLKATKVDGIYNKDPQKHCDAVKYSTLSYDEVISQNLEVMDTAAFALARDSNLPLRIFDIEQPGVLLRILHGEEIGTLVKERNSKS</sequence>
<keyword id="KW-0067">ATP-binding</keyword>
<keyword id="KW-0963">Cytoplasm</keyword>
<keyword id="KW-0418">Kinase</keyword>
<keyword id="KW-0547">Nucleotide-binding</keyword>
<keyword id="KW-0665">Pyrimidine biosynthesis</keyword>
<keyword id="KW-1185">Reference proteome</keyword>
<keyword id="KW-0808">Transferase</keyword>
<protein>
    <recommendedName>
        <fullName evidence="1">Uridylate kinase</fullName>
        <shortName evidence="1">UK</shortName>
        <ecNumber evidence="1">2.7.4.22</ecNumber>
    </recommendedName>
    <alternativeName>
        <fullName evidence="1">Uridine monophosphate kinase</fullName>
        <shortName evidence="1">UMP kinase</shortName>
        <shortName evidence="1">UMPK</shortName>
    </alternativeName>
</protein>
<comment type="function">
    <text evidence="1">Catalyzes the reversible phosphorylation of UMP to UDP.</text>
</comment>
<comment type="catalytic activity">
    <reaction evidence="1">
        <text>UMP + ATP = UDP + ADP</text>
        <dbReference type="Rhea" id="RHEA:24400"/>
        <dbReference type="ChEBI" id="CHEBI:30616"/>
        <dbReference type="ChEBI" id="CHEBI:57865"/>
        <dbReference type="ChEBI" id="CHEBI:58223"/>
        <dbReference type="ChEBI" id="CHEBI:456216"/>
        <dbReference type="EC" id="2.7.4.22"/>
    </reaction>
</comment>
<comment type="activity regulation">
    <text evidence="1">Inhibited by UTP.</text>
</comment>
<comment type="pathway">
    <text evidence="1">Pyrimidine metabolism; CTP biosynthesis via de novo pathway; UDP from UMP (UMPK route): step 1/1.</text>
</comment>
<comment type="subunit">
    <text evidence="1">Homohexamer.</text>
</comment>
<comment type="subcellular location">
    <subcellularLocation>
        <location evidence="1">Cytoplasm</location>
    </subcellularLocation>
</comment>
<comment type="similarity">
    <text evidence="1">Belongs to the UMP kinase family.</text>
</comment>